<dbReference type="EMBL" id="CP000046">
    <property type="protein sequence ID" value="AAW36904.1"/>
    <property type="molecule type" value="Genomic_DNA"/>
</dbReference>
<dbReference type="RefSeq" id="WP_000737976.1">
    <property type="nucleotide sequence ID" value="NZ_JBGOFO010000011.1"/>
</dbReference>
<dbReference type="SMR" id="Q5HEU0"/>
<dbReference type="KEGG" id="sac:SACOL1891"/>
<dbReference type="HOGENOM" id="CLU_116220_0_0_9"/>
<dbReference type="Proteomes" id="UP000000530">
    <property type="component" value="Chromosome"/>
</dbReference>
<dbReference type="GO" id="GO:0016020">
    <property type="term" value="C:membrane"/>
    <property type="evidence" value="ECO:0007669"/>
    <property type="project" value="UniProtKB-SubCell"/>
</dbReference>
<dbReference type="Gene3D" id="3.30.70.100">
    <property type="match status" value="1"/>
</dbReference>
<dbReference type="InterPro" id="IPR007138">
    <property type="entry name" value="ABM_dom"/>
</dbReference>
<dbReference type="InterPro" id="IPR011008">
    <property type="entry name" value="Dimeric_a/b-barrel"/>
</dbReference>
<dbReference type="InterPro" id="IPR050404">
    <property type="entry name" value="Heme-degrading_MO"/>
</dbReference>
<dbReference type="PANTHER" id="PTHR34474">
    <property type="entry name" value="SIGNAL TRANSDUCTION PROTEIN TRAP"/>
    <property type="match status" value="1"/>
</dbReference>
<dbReference type="PANTHER" id="PTHR34474:SF2">
    <property type="entry name" value="SIGNAL TRANSDUCTION PROTEIN TRAP"/>
    <property type="match status" value="1"/>
</dbReference>
<dbReference type="SUPFAM" id="SSF54909">
    <property type="entry name" value="Dimeric alpha+beta barrel"/>
    <property type="match status" value="1"/>
</dbReference>
<dbReference type="PROSITE" id="PS51725">
    <property type="entry name" value="ABM"/>
    <property type="match status" value="1"/>
</dbReference>
<accession>Q5HEU0</accession>
<feature type="chain" id="PRO_0000289337" description="Signal transduction protein TRAP">
    <location>
        <begin position="1"/>
        <end position="167"/>
    </location>
</feature>
<feature type="domain" description="ABM">
    <location>
        <begin position="67"/>
        <end position="158"/>
    </location>
</feature>
<feature type="modified residue" description="Phosphohistidine" evidence="1">
    <location>
        <position position="66"/>
    </location>
</feature>
<feature type="modified residue" description="Phosphohistidine" evidence="1">
    <location>
        <position position="79"/>
    </location>
</feature>
<feature type="modified residue" description="Phosphohistidine" evidence="1">
    <location>
        <position position="154"/>
    </location>
</feature>
<name>TRAP_STAAC</name>
<organism>
    <name type="scientific">Staphylococcus aureus (strain COL)</name>
    <dbReference type="NCBI Taxonomy" id="93062"/>
    <lineage>
        <taxon>Bacteria</taxon>
        <taxon>Bacillati</taxon>
        <taxon>Bacillota</taxon>
        <taxon>Bacilli</taxon>
        <taxon>Bacillales</taxon>
        <taxon>Staphylococcaceae</taxon>
        <taxon>Staphylococcus</taxon>
    </lineage>
</organism>
<evidence type="ECO:0000250" key="1"/>
<evidence type="ECO:0000305" key="2"/>
<keyword id="KW-0472">Membrane</keyword>
<keyword id="KW-0597">Phosphoprotein</keyword>
<keyword id="KW-0843">Virulence</keyword>
<sequence length="167" mass="19548">MKKLYTSYGTYGFLHQIKINNPTHQLFQFSASDTSVIFEETDGETVLKSPSIYEVIKEIGEFSEHHFYCAIFIPSTEDHAYQLEKKLISVDDNFRNFGGFKSYRLLRPAKGTTYKIYFGFADRHAYEDFKQSDAFNDHFSKDALSHYFGSSGQHSSYFERYLYPIKE</sequence>
<reference key="1">
    <citation type="journal article" date="2005" name="J. Bacteriol.">
        <title>Insights on evolution of virulence and resistance from the complete genome analysis of an early methicillin-resistant Staphylococcus aureus strain and a biofilm-producing methicillin-resistant Staphylococcus epidermidis strain.</title>
        <authorList>
            <person name="Gill S.R."/>
            <person name="Fouts D.E."/>
            <person name="Archer G.L."/>
            <person name="Mongodin E.F."/>
            <person name="DeBoy R.T."/>
            <person name="Ravel J."/>
            <person name="Paulsen I.T."/>
            <person name="Kolonay J.F."/>
            <person name="Brinkac L.M."/>
            <person name="Beanan M.J."/>
            <person name="Dodson R.J."/>
            <person name="Daugherty S.C."/>
            <person name="Madupu R."/>
            <person name="Angiuoli S.V."/>
            <person name="Durkin A.S."/>
            <person name="Haft D.H."/>
            <person name="Vamathevan J.J."/>
            <person name="Khouri H."/>
            <person name="Utterback T.R."/>
            <person name="Lee C."/>
            <person name="Dimitrov G."/>
            <person name="Jiang L."/>
            <person name="Qin H."/>
            <person name="Weidman J."/>
            <person name="Tran K."/>
            <person name="Kang K.H."/>
            <person name="Hance I.R."/>
            <person name="Nelson K.E."/>
            <person name="Fraser C.M."/>
        </authorList>
    </citation>
    <scope>NUCLEOTIDE SEQUENCE [LARGE SCALE GENOMIC DNA]</scope>
    <source>
        <strain>COL</strain>
    </source>
</reference>
<comment type="function">
    <text evidence="1">Signal transduction protein, which is a major regulator of staphylococcal pathogenesis. Phosphorylated TRAP leads to the activation of agr system and consequent RNAIII synthesis resulting in the expression of several virulence factors. Up-regulates the expression of most toxins and genes known to be necessary for biofilm formation (By similarity).</text>
</comment>
<comment type="subcellular location">
    <subcellularLocation>
        <location>Membrane</location>
    </subcellularLocation>
    <text evidence="1">Membrane-associated.</text>
</comment>
<comment type="PTM">
    <text evidence="1">Each of the three conserved histidine residues contributes to TRAP phosphorylation. Phosphorylation is essential for TRAP activity (By similarity).</text>
</comment>
<comment type="PTM">
    <text evidence="1">Phosphorylation of TRAP is activated by RAP and necessary for the induction of RNAIII gene expression but not for ongoing transcription. TRAP is dephosphorylated from the mid-exponential phase of growth, which is when agr is activated and AIP is produced. RIP acts by inhibiting TRAP phosphorylation (By similarity).</text>
</comment>
<comment type="similarity">
    <text evidence="2">Belongs to the TRAP family.</text>
</comment>
<proteinExistence type="inferred from homology"/>
<gene>
    <name type="primary">traP</name>
    <name type="ordered locus">SACOL1891</name>
</gene>
<protein>
    <recommendedName>
        <fullName>Signal transduction protein TRAP</fullName>
    </recommendedName>
    <alternativeName>
        <fullName>Target of RNAIII-activating protein</fullName>
    </alternativeName>
</protein>